<accession>P27055</accession>
<name>RLA2_BABBO</name>
<proteinExistence type="inferred from homology"/>
<organism>
    <name type="scientific">Babesia bovis</name>
    <dbReference type="NCBI Taxonomy" id="5865"/>
    <lineage>
        <taxon>Eukaryota</taxon>
        <taxon>Sar</taxon>
        <taxon>Alveolata</taxon>
        <taxon>Apicomplexa</taxon>
        <taxon>Aconoidasida</taxon>
        <taxon>Piroplasmida</taxon>
        <taxon>Babesiidae</taxon>
        <taxon>Babesia</taxon>
    </lineage>
</organism>
<protein>
    <recommendedName>
        <fullName evidence="3">Large ribosomal subunit protein P2</fullName>
    </recommendedName>
    <alternativeName>
        <fullName>60S acidic ribosomal protein P2</fullName>
    </alternativeName>
    <alternativeName>
        <fullName>L12EI</fullName>
    </alternativeName>
</protein>
<dbReference type="EMBL" id="M81359">
    <property type="protein sequence ID" value="AAA27797.1"/>
    <property type="molecule type" value="mRNA"/>
</dbReference>
<dbReference type="PIR" id="S35440">
    <property type="entry name" value="S35440"/>
</dbReference>
<dbReference type="SMR" id="P27055"/>
<dbReference type="VEuPathDB" id="PiroplasmaDB:BBOV_III006260"/>
<dbReference type="eggNOG" id="KOG3449">
    <property type="taxonomic scope" value="Eukaryota"/>
</dbReference>
<dbReference type="OMA" id="MKVIASY"/>
<dbReference type="GO" id="GO:0022625">
    <property type="term" value="C:cytosolic large ribosomal subunit"/>
    <property type="evidence" value="ECO:0007669"/>
    <property type="project" value="InterPro"/>
</dbReference>
<dbReference type="GO" id="GO:0003735">
    <property type="term" value="F:structural constituent of ribosome"/>
    <property type="evidence" value="ECO:0007669"/>
    <property type="project" value="InterPro"/>
</dbReference>
<dbReference type="GO" id="GO:0002182">
    <property type="term" value="P:cytoplasmic translational elongation"/>
    <property type="evidence" value="ECO:0007669"/>
    <property type="project" value="InterPro"/>
</dbReference>
<dbReference type="CDD" id="cd05833">
    <property type="entry name" value="Ribosomal_P2"/>
    <property type="match status" value="1"/>
</dbReference>
<dbReference type="FunFam" id="1.10.10.1410:FF:000002">
    <property type="entry name" value="60S acidic ribosomal protein P2"/>
    <property type="match status" value="1"/>
</dbReference>
<dbReference type="Gene3D" id="1.10.10.1410">
    <property type="match status" value="1"/>
</dbReference>
<dbReference type="HAMAP" id="MF_01478">
    <property type="entry name" value="Ribosomal_L12_arch"/>
    <property type="match status" value="1"/>
</dbReference>
<dbReference type="InterPro" id="IPR038716">
    <property type="entry name" value="P1/P2_N_sf"/>
</dbReference>
<dbReference type="InterPro" id="IPR027534">
    <property type="entry name" value="Ribosomal_P1/P2"/>
</dbReference>
<dbReference type="InterPro" id="IPR044076">
    <property type="entry name" value="Ribosomal_P2"/>
</dbReference>
<dbReference type="PANTHER" id="PTHR21141">
    <property type="entry name" value="60S ACIDIC RIBOSOMAL PROTEIN FAMILY MEMBER"/>
    <property type="match status" value="1"/>
</dbReference>
<dbReference type="PANTHER" id="PTHR21141:SF5">
    <property type="entry name" value="LARGE RIBOSOMAL SUBUNIT PROTEIN P2"/>
    <property type="match status" value="1"/>
</dbReference>
<dbReference type="Pfam" id="PF00428">
    <property type="entry name" value="Ribosomal_60s"/>
    <property type="match status" value="1"/>
</dbReference>
<keyword id="KW-0597">Phosphoprotein</keyword>
<keyword id="KW-0687">Ribonucleoprotein</keyword>
<keyword id="KW-0689">Ribosomal protein</keyword>
<comment type="function">
    <text>Plays an important role in the elongation step of protein synthesis.</text>
</comment>
<comment type="subunit">
    <text>P1 and P2 exist as dimers at the large ribosomal subunit.</text>
</comment>
<comment type="PTM">
    <text evidence="1">Phosphorylated.</text>
</comment>
<comment type="similarity">
    <text evidence="3">Belongs to the eukaryotic ribosomal protein P1/P2 family.</text>
</comment>
<reference key="1">
    <citation type="journal article" date="1992" name="Nucleic Acids Res.">
        <title>Identification of L10e/L12e ribosomal protein genes in Babesia bovis.</title>
        <authorList>
            <person name="Dalrymple B.P."/>
            <person name="Peters J.M."/>
        </authorList>
    </citation>
    <scope>NUCLEOTIDE SEQUENCE [MRNA]</scope>
</reference>
<sequence length="112" mass="11461">MALKYVSSYLLAVAAGNENPSVDDLKKILDAVGSDVDEECLQGLVDSMSGKTVHETIAAGMTKLQSMPAGGAAMPAAAAGGAPAAAEDKAEAKKPEAEPEEEEDDMGFSLFD</sequence>
<evidence type="ECO:0000250" key="1"/>
<evidence type="ECO:0000256" key="2">
    <source>
        <dbReference type="SAM" id="MobiDB-lite"/>
    </source>
</evidence>
<evidence type="ECO:0000305" key="3"/>
<feature type="chain" id="PRO_0000157646" description="Large ribosomal subunit protein P2">
    <location>
        <begin position="1"/>
        <end position="112"/>
    </location>
</feature>
<feature type="region of interest" description="Disordered" evidence="2">
    <location>
        <begin position="69"/>
        <end position="112"/>
    </location>
</feature>
<feature type="compositionally biased region" description="Low complexity" evidence="2">
    <location>
        <begin position="69"/>
        <end position="85"/>
    </location>
</feature>
<feature type="compositionally biased region" description="Basic and acidic residues" evidence="2">
    <location>
        <begin position="86"/>
        <end position="97"/>
    </location>
</feature>